<accession>A5UHA1</accession>
<dbReference type="EMBL" id="CP000672">
    <property type="protein sequence ID" value="ABR00157.1"/>
    <property type="molecule type" value="Genomic_DNA"/>
</dbReference>
<dbReference type="SMR" id="A5UHA1"/>
<dbReference type="KEGG" id="hiq:CGSHiGG_06280"/>
<dbReference type="HOGENOM" id="CLU_114342_3_3_6"/>
<dbReference type="Proteomes" id="UP000001990">
    <property type="component" value="Chromosome"/>
</dbReference>
<dbReference type="GO" id="GO:0005886">
    <property type="term" value="C:plasma membrane"/>
    <property type="evidence" value="ECO:0007669"/>
    <property type="project" value="UniProtKB-SubCell"/>
</dbReference>
<dbReference type="GO" id="GO:0062054">
    <property type="term" value="F:fluoride channel activity"/>
    <property type="evidence" value="ECO:0007669"/>
    <property type="project" value="UniProtKB-UniRule"/>
</dbReference>
<dbReference type="GO" id="GO:0046872">
    <property type="term" value="F:metal ion binding"/>
    <property type="evidence" value="ECO:0007669"/>
    <property type="project" value="UniProtKB-KW"/>
</dbReference>
<dbReference type="GO" id="GO:0140114">
    <property type="term" value="P:cellular detoxification of fluoride"/>
    <property type="evidence" value="ECO:0007669"/>
    <property type="project" value="UniProtKB-UniRule"/>
</dbReference>
<dbReference type="HAMAP" id="MF_00454">
    <property type="entry name" value="FluC"/>
    <property type="match status" value="1"/>
</dbReference>
<dbReference type="InterPro" id="IPR003691">
    <property type="entry name" value="FluC"/>
</dbReference>
<dbReference type="NCBIfam" id="TIGR00494">
    <property type="entry name" value="crcB"/>
    <property type="match status" value="1"/>
</dbReference>
<dbReference type="NCBIfam" id="NF010792">
    <property type="entry name" value="PRK14196.1"/>
    <property type="match status" value="1"/>
</dbReference>
<dbReference type="PANTHER" id="PTHR28259">
    <property type="entry name" value="FLUORIDE EXPORT PROTEIN 1-RELATED"/>
    <property type="match status" value="1"/>
</dbReference>
<dbReference type="PANTHER" id="PTHR28259:SF1">
    <property type="entry name" value="FLUORIDE EXPORT PROTEIN 1-RELATED"/>
    <property type="match status" value="1"/>
</dbReference>
<dbReference type="Pfam" id="PF02537">
    <property type="entry name" value="CRCB"/>
    <property type="match status" value="1"/>
</dbReference>
<reference key="1">
    <citation type="journal article" date="2007" name="Genome Biol.">
        <title>Characterization and modeling of the Haemophilus influenzae core and supragenomes based on the complete genomic sequences of Rd and 12 clinical nontypeable strains.</title>
        <authorList>
            <person name="Hogg J.S."/>
            <person name="Hu F.Z."/>
            <person name="Janto B."/>
            <person name="Boissy R."/>
            <person name="Hayes J."/>
            <person name="Keefe R."/>
            <person name="Post J.C."/>
            <person name="Ehrlich G.D."/>
        </authorList>
    </citation>
    <scope>NUCLEOTIDE SEQUENCE [LARGE SCALE GENOMIC DNA]</scope>
    <source>
        <strain>PittGG</strain>
    </source>
</reference>
<gene>
    <name evidence="1" type="primary">fluC</name>
    <name evidence="1" type="synonym">crcB</name>
    <name type="ordered locus">CGSHiGG_06280</name>
</gene>
<evidence type="ECO:0000255" key="1">
    <source>
        <dbReference type="HAMAP-Rule" id="MF_00454"/>
    </source>
</evidence>
<protein>
    <recommendedName>
        <fullName evidence="1">Fluoride-specific ion channel FluC</fullName>
    </recommendedName>
</protein>
<feature type="chain" id="PRO_1000026392" description="Fluoride-specific ion channel FluC">
    <location>
        <begin position="1"/>
        <end position="128"/>
    </location>
</feature>
<feature type="transmembrane region" description="Helical" evidence="1">
    <location>
        <begin position="5"/>
        <end position="25"/>
    </location>
</feature>
<feature type="transmembrane region" description="Helical" evidence="1">
    <location>
        <begin position="34"/>
        <end position="54"/>
    </location>
</feature>
<feature type="transmembrane region" description="Helical" evidence="1">
    <location>
        <begin position="67"/>
        <end position="87"/>
    </location>
</feature>
<feature type="transmembrane region" description="Helical" evidence="1">
    <location>
        <begin position="99"/>
        <end position="119"/>
    </location>
</feature>
<feature type="binding site" evidence="1">
    <location>
        <position position="74"/>
    </location>
    <ligand>
        <name>Na(+)</name>
        <dbReference type="ChEBI" id="CHEBI:29101"/>
        <note>structural</note>
    </ligand>
</feature>
<feature type="binding site" evidence="1">
    <location>
        <position position="77"/>
    </location>
    <ligand>
        <name>Na(+)</name>
        <dbReference type="ChEBI" id="CHEBI:29101"/>
        <note>structural</note>
    </ligand>
</feature>
<name>FLUC_HAEIG</name>
<sequence>MQALLFISCGAILGASLRWAIGLLFNPLFSSFAFGTLIANLFGCLIIGVLLGLFWQFPQISSEWRLFLITGFLGSLTTFSSFSSEVVELFFNDKWLNGFCVLMMHLFGCLAMTVLGIWIYKICSQLLS</sequence>
<keyword id="KW-0997">Cell inner membrane</keyword>
<keyword id="KW-1003">Cell membrane</keyword>
<keyword id="KW-0407">Ion channel</keyword>
<keyword id="KW-0406">Ion transport</keyword>
<keyword id="KW-0472">Membrane</keyword>
<keyword id="KW-0479">Metal-binding</keyword>
<keyword id="KW-0915">Sodium</keyword>
<keyword id="KW-0812">Transmembrane</keyword>
<keyword id="KW-1133">Transmembrane helix</keyword>
<keyword id="KW-0813">Transport</keyword>
<proteinExistence type="inferred from homology"/>
<organism>
    <name type="scientific">Haemophilus influenzae (strain PittGG)</name>
    <dbReference type="NCBI Taxonomy" id="374931"/>
    <lineage>
        <taxon>Bacteria</taxon>
        <taxon>Pseudomonadati</taxon>
        <taxon>Pseudomonadota</taxon>
        <taxon>Gammaproteobacteria</taxon>
        <taxon>Pasteurellales</taxon>
        <taxon>Pasteurellaceae</taxon>
        <taxon>Haemophilus</taxon>
    </lineage>
</organism>
<comment type="function">
    <text evidence="1">Fluoride-specific ion channel. Important for reducing fluoride concentration in the cell, thus reducing its toxicity.</text>
</comment>
<comment type="catalytic activity">
    <reaction evidence="1">
        <text>fluoride(in) = fluoride(out)</text>
        <dbReference type="Rhea" id="RHEA:76159"/>
        <dbReference type="ChEBI" id="CHEBI:17051"/>
    </reaction>
    <physiologicalReaction direction="left-to-right" evidence="1">
        <dbReference type="Rhea" id="RHEA:76160"/>
    </physiologicalReaction>
</comment>
<comment type="activity regulation">
    <text evidence="1">Na(+) is not transported, but it plays an essential structural role and its presence is essential for fluoride channel function.</text>
</comment>
<comment type="subcellular location">
    <subcellularLocation>
        <location evidence="1">Cell inner membrane</location>
        <topology evidence="1">Multi-pass membrane protein</topology>
    </subcellularLocation>
</comment>
<comment type="similarity">
    <text evidence="1">Belongs to the fluoride channel Fluc/FEX (TC 1.A.43) family.</text>
</comment>